<reference key="1">
    <citation type="submission" date="2008-06" db="EMBL/GenBank/DDBJ databases">
        <title>Complete sequence of chromosome of Prosthecochloris aestuarii DSM 271.</title>
        <authorList>
            <consortium name="US DOE Joint Genome Institute"/>
            <person name="Lucas S."/>
            <person name="Copeland A."/>
            <person name="Lapidus A."/>
            <person name="Glavina del Rio T."/>
            <person name="Dalin E."/>
            <person name="Tice H."/>
            <person name="Bruce D."/>
            <person name="Goodwin L."/>
            <person name="Pitluck S."/>
            <person name="Schmutz J."/>
            <person name="Larimer F."/>
            <person name="Land M."/>
            <person name="Hauser L."/>
            <person name="Kyrpides N."/>
            <person name="Anderson I."/>
            <person name="Liu Z."/>
            <person name="Li T."/>
            <person name="Zhao F."/>
            <person name="Overmann J."/>
            <person name="Bryant D.A."/>
            <person name="Richardson P."/>
        </authorList>
    </citation>
    <scope>NUCLEOTIDE SEQUENCE [LARGE SCALE GENOMIC DNA]</scope>
    <source>
        <strain>DSM 271 / SK 413</strain>
    </source>
</reference>
<name>ENO_PROA2</name>
<organism>
    <name type="scientific">Prosthecochloris aestuarii (strain DSM 271 / SK 413)</name>
    <dbReference type="NCBI Taxonomy" id="290512"/>
    <lineage>
        <taxon>Bacteria</taxon>
        <taxon>Pseudomonadati</taxon>
        <taxon>Chlorobiota</taxon>
        <taxon>Chlorobiia</taxon>
        <taxon>Chlorobiales</taxon>
        <taxon>Chlorobiaceae</taxon>
        <taxon>Prosthecochloris</taxon>
    </lineage>
</organism>
<comment type="function">
    <text evidence="1">Catalyzes the reversible conversion of 2-phosphoglycerate (2-PG) into phosphoenolpyruvate (PEP). It is essential for the degradation of carbohydrates via glycolysis.</text>
</comment>
<comment type="catalytic activity">
    <reaction evidence="1">
        <text>(2R)-2-phosphoglycerate = phosphoenolpyruvate + H2O</text>
        <dbReference type="Rhea" id="RHEA:10164"/>
        <dbReference type="ChEBI" id="CHEBI:15377"/>
        <dbReference type="ChEBI" id="CHEBI:58289"/>
        <dbReference type="ChEBI" id="CHEBI:58702"/>
        <dbReference type="EC" id="4.2.1.11"/>
    </reaction>
</comment>
<comment type="cofactor">
    <cofactor evidence="1">
        <name>Mg(2+)</name>
        <dbReference type="ChEBI" id="CHEBI:18420"/>
    </cofactor>
    <text evidence="1">Binds a second Mg(2+) ion via substrate during catalysis.</text>
</comment>
<comment type="pathway">
    <text evidence="1">Carbohydrate degradation; glycolysis; pyruvate from D-glyceraldehyde 3-phosphate: step 4/5.</text>
</comment>
<comment type="subcellular location">
    <subcellularLocation>
        <location evidence="1">Cytoplasm</location>
    </subcellularLocation>
    <subcellularLocation>
        <location evidence="1">Secreted</location>
    </subcellularLocation>
    <subcellularLocation>
        <location evidence="1">Cell surface</location>
    </subcellularLocation>
    <text evidence="1">Fractions of enolase are present in both the cytoplasm and on the cell surface.</text>
</comment>
<comment type="similarity">
    <text evidence="1">Belongs to the enolase family.</text>
</comment>
<keyword id="KW-0963">Cytoplasm</keyword>
<keyword id="KW-0324">Glycolysis</keyword>
<keyword id="KW-0456">Lyase</keyword>
<keyword id="KW-0460">Magnesium</keyword>
<keyword id="KW-0479">Metal-binding</keyword>
<keyword id="KW-0964">Secreted</keyword>
<proteinExistence type="inferred from homology"/>
<sequence length="437" mass="46731">MPLITNVIARQILDSRGNPTVEVDVLTESSFGRAAVPSGASTGIHEAVELRDGDREVYLGKGVLKAVENVNTVINDALEGMLVTEQTEIDKLLLSLDGTPNKSKLGANALLGVSLACAKAAAEYSGLPLFRYIGGTLANTLPVPMMNVLNGGAHADNNVDFQEFMIMPIGFSSYSDALRCGAEVFHALKALLKSKGLSTAVGDEGGFAPDLASNEEAIELVIEAVGKAGYKAGSPTNAGGLGDAHVMIALDPASSEFYDTDKKKYIFKKSSGQELDSAEMASYWENWAGKYPIISIEDGMAEDDWEGWKILTDKIGSRVQLVGDDLFVTNSIRLADGIERKVGNSILIKVNQIGTLTETLQAIDLAKRNGYTSVISHRSGETEDSTIAQIAVATNAGQIKTGSLSRSDRMAKYNELLRIEEELGDEACYPGIRAFRV</sequence>
<protein>
    <recommendedName>
        <fullName evidence="1">Enolase</fullName>
        <ecNumber evidence="1">4.2.1.11</ecNumber>
    </recommendedName>
    <alternativeName>
        <fullName evidence="1">2-phospho-D-glycerate hydro-lyase</fullName>
    </alternativeName>
    <alternativeName>
        <fullName evidence="1">2-phosphoglycerate dehydratase</fullName>
    </alternativeName>
</protein>
<accession>B4S487</accession>
<gene>
    <name evidence="1" type="primary">eno</name>
    <name type="ordered locus">Paes_0278</name>
</gene>
<dbReference type="EC" id="4.2.1.11" evidence="1"/>
<dbReference type="EMBL" id="CP001108">
    <property type="protein sequence ID" value="ACF45335.1"/>
    <property type="molecule type" value="Genomic_DNA"/>
</dbReference>
<dbReference type="RefSeq" id="WP_012504872.1">
    <property type="nucleotide sequence ID" value="NC_011059.1"/>
</dbReference>
<dbReference type="SMR" id="B4S487"/>
<dbReference type="STRING" id="290512.Paes_0278"/>
<dbReference type="KEGG" id="paa:Paes_0278"/>
<dbReference type="eggNOG" id="COG0148">
    <property type="taxonomic scope" value="Bacteria"/>
</dbReference>
<dbReference type="HOGENOM" id="CLU_031223_2_1_10"/>
<dbReference type="UniPathway" id="UPA00109">
    <property type="reaction ID" value="UER00187"/>
</dbReference>
<dbReference type="Proteomes" id="UP000002725">
    <property type="component" value="Chromosome"/>
</dbReference>
<dbReference type="GO" id="GO:0009986">
    <property type="term" value="C:cell surface"/>
    <property type="evidence" value="ECO:0007669"/>
    <property type="project" value="UniProtKB-SubCell"/>
</dbReference>
<dbReference type="GO" id="GO:0005576">
    <property type="term" value="C:extracellular region"/>
    <property type="evidence" value="ECO:0007669"/>
    <property type="project" value="UniProtKB-SubCell"/>
</dbReference>
<dbReference type="GO" id="GO:0000015">
    <property type="term" value="C:phosphopyruvate hydratase complex"/>
    <property type="evidence" value="ECO:0007669"/>
    <property type="project" value="InterPro"/>
</dbReference>
<dbReference type="GO" id="GO:0000287">
    <property type="term" value="F:magnesium ion binding"/>
    <property type="evidence" value="ECO:0007669"/>
    <property type="project" value="UniProtKB-UniRule"/>
</dbReference>
<dbReference type="GO" id="GO:0004634">
    <property type="term" value="F:phosphopyruvate hydratase activity"/>
    <property type="evidence" value="ECO:0007669"/>
    <property type="project" value="UniProtKB-UniRule"/>
</dbReference>
<dbReference type="GO" id="GO:0006096">
    <property type="term" value="P:glycolytic process"/>
    <property type="evidence" value="ECO:0007669"/>
    <property type="project" value="UniProtKB-UniRule"/>
</dbReference>
<dbReference type="CDD" id="cd03313">
    <property type="entry name" value="enolase"/>
    <property type="match status" value="1"/>
</dbReference>
<dbReference type="FunFam" id="3.20.20.120:FF:000001">
    <property type="entry name" value="Enolase"/>
    <property type="match status" value="1"/>
</dbReference>
<dbReference type="FunFam" id="3.30.390.10:FF:000001">
    <property type="entry name" value="Enolase"/>
    <property type="match status" value="1"/>
</dbReference>
<dbReference type="Gene3D" id="3.20.20.120">
    <property type="entry name" value="Enolase-like C-terminal domain"/>
    <property type="match status" value="1"/>
</dbReference>
<dbReference type="Gene3D" id="3.30.390.10">
    <property type="entry name" value="Enolase-like, N-terminal domain"/>
    <property type="match status" value="1"/>
</dbReference>
<dbReference type="HAMAP" id="MF_00318">
    <property type="entry name" value="Enolase"/>
    <property type="match status" value="1"/>
</dbReference>
<dbReference type="InterPro" id="IPR000941">
    <property type="entry name" value="Enolase"/>
</dbReference>
<dbReference type="InterPro" id="IPR036849">
    <property type="entry name" value="Enolase-like_C_sf"/>
</dbReference>
<dbReference type="InterPro" id="IPR029017">
    <property type="entry name" value="Enolase-like_N"/>
</dbReference>
<dbReference type="InterPro" id="IPR020810">
    <property type="entry name" value="Enolase_C"/>
</dbReference>
<dbReference type="InterPro" id="IPR020809">
    <property type="entry name" value="Enolase_CS"/>
</dbReference>
<dbReference type="InterPro" id="IPR020811">
    <property type="entry name" value="Enolase_N"/>
</dbReference>
<dbReference type="NCBIfam" id="TIGR01060">
    <property type="entry name" value="eno"/>
    <property type="match status" value="1"/>
</dbReference>
<dbReference type="PANTHER" id="PTHR11902">
    <property type="entry name" value="ENOLASE"/>
    <property type="match status" value="1"/>
</dbReference>
<dbReference type="PANTHER" id="PTHR11902:SF1">
    <property type="entry name" value="ENOLASE"/>
    <property type="match status" value="1"/>
</dbReference>
<dbReference type="Pfam" id="PF00113">
    <property type="entry name" value="Enolase_C"/>
    <property type="match status" value="1"/>
</dbReference>
<dbReference type="Pfam" id="PF03952">
    <property type="entry name" value="Enolase_N"/>
    <property type="match status" value="1"/>
</dbReference>
<dbReference type="PIRSF" id="PIRSF001400">
    <property type="entry name" value="Enolase"/>
    <property type="match status" value="1"/>
</dbReference>
<dbReference type="PRINTS" id="PR00148">
    <property type="entry name" value="ENOLASE"/>
</dbReference>
<dbReference type="SFLD" id="SFLDF00002">
    <property type="entry name" value="enolase"/>
    <property type="match status" value="1"/>
</dbReference>
<dbReference type="SFLD" id="SFLDG00178">
    <property type="entry name" value="enolase"/>
    <property type="match status" value="1"/>
</dbReference>
<dbReference type="SMART" id="SM01192">
    <property type="entry name" value="Enolase_C"/>
    <property type="match status" value="1"/>
</dbReference>
<dbReference type="SMART" id="SM01193">
    <property type="entry name" value="Enolase_N"/>
    <property type="match status" value="1"/>
</dbReference>
<dbReference type="SUPFAM" id="SSF51604">
    <property type="entry name" value="Enolase C-terminal domain-like"/>
    <property type="match status" value="1"/>
</dbReference>
<dbReference type="SUPFAM" id="SSF54826">
    <property type="entry name" value="Enolase N-terminal domain-like"/>
    <property type="match status" value="1"/>
</dbReference>
<dbReference type="PROSITE" id="PS00164">
    <property type="entry name" value="ENOLASE"/>
    <property type="match status" value="1"/>
</dbReference>
<feature type="chain" id="PRO_1000115898" description="Enolase">
    <location>
        <begin position="1"/>
        <end position="437"/>
    </location>
</feature>
<feature type="active site" description="Proton donor" evidence="1">
    <location>
        <position position="204"/>
    </location>
</feature>
<feature type="active site" description="Proton acceptor" evidence="1">
    <location>
        <position position="349"/>
    </location>
</feature>
<feature type="binding site" evidence="1">
    <location>
        <position position="162"/>
    </location>
    <ligand>
        <name>(2R)-2-phosphoglycerate</name>
        <dbReference type="ChEBI" id="CHEBI:58289"/>
    </ligand>
</feature>
<feature type="binding site" evidence="1">
    <location>
        <position position="251"/>
    </location>
    <ligand>
        <name>Mg(2+)</name>
        <dbReference type="ChEBI" id="CHEBI:18420"/>
    </ligand>
</feature>
<feature type="binding site" evidence="1">
    <location>
        <position position="297"/>
    </location>
    <ligand>
        <name>Mg(2+)</name>
        <dbReference type="ChEBI" id="CHEBI:18420"/>
    </ligand>
</feature>
<feature type="binding site" evidence="1">
    <location>
        <position position="324"/>
    </location>
    <ligand>
        <name>Mg(2+)</name>
        <dbReference type="ChEBI" id="CHEBI:18420"/>
    </ligand>
</feature>
<feature type="binding site" evidence="1">
    <location>
        <position position="349"/>
    </location>
    <ligand>
        <name>(2R)-2-phosphoglycerate</name>
        <dbReference type="ChEBI" id="CHEBI:58289"/>
    </ligand>
</feature>
<feature type="binding site" evidence="1">
    <location>
        <position position="378"/>
    </location>
    <ligand>
        <name>(2R)-2-phosphoglycerate</name>
        <dbReference type="ChEBI" id="CHEBI:58289"/>
    </ligand>
</feature>
<feature type="binding site" evidence="1">
    <location>
        <position position="379"/>
    </location>
    <ligand>
        <name>(2R)-2-phosphoglycerate</name>
        <dbReference type="ChEBI" id="CHEBI:58289"/>
    </ligand>
</feature>
<feature type="binding site" evidence="1">
    <location>
        <position position="400"/>
    </location>
    <ligand>
        <name>(2R)-2-phosphoglycerate</name>
        <dbReference type="ChEBI" id="CHEBI:58289"/>
    </ligand>
</feature>
<evidence type="ECO:0000255" key="1">
    <source>
        <dbReference type="HAMAP-Rule" id="MF_00318"/>
    </source>
</evidence>